<feature type="signal peptide" evidence="1">
    <location>
        <begin position="1"/>
        <end position="40"/>
    </location>
</feature>
<feature type="chain" id="PRO_0000035619" description="Toxic shock syndrome toxin-1">
    <location>
        <begin position="41"/>
        <end position="234"/>
    </location>
</feature>
<feature type="helix" evidence="7">
    <location>
        <begin position="44"/>
        <end position="53"/>
    </location>
</feature>
<feature type="strand" evidence="7">
    <location>
        <begin position="58"/>
        <end position="68"/>
    </location>
</feature>
<feature type="strand" evidence="7">
    <location>
        <begin position="70"/>
        <end position="76"/>
    </location>
</feature>
<feature type="strand" evidence="7">
    <location>
        <begin position="82"/>
        <end position="86"/>
    </location>
</feature>
<feature type="strand" evidence="4">
    <location>
        <begin position="90"/>
        <end position="92"/>
    </location>
</feature>
<feature type="strand" evidence="7">
    <location>
        <begin position="101"/>
        <end position="114"/>
    </location>
</feature>
<feature type="strand" evidence="5">
    <location>
        <begin position="116"/>
        <end position="118"/>
    </location>
</feature>
<feature type="strand" evidence="7">
    <location>
        <begin position="120"/>
        <end position="126"/>
    </location>
</feature>
<feature type="strand" evidence="4">
    <location>
        <begin position="128"/>
        <end position="130"/>
    </location>
</feature>
<feature type="strand" evidence="7">
    <location>
        <begin position="133"/>
        <end position="139"/>
    </location>
</feature>
<feature type="strand" evidence="7">
    <location>
        <begin position="143"/>
        <end position="146"/>
    </location>
</feature>
<feature type="strand" evidence="6">
    <location>
        <begin position="149"/>
        <end position="151"/>
    </location>
</feature>
<feature type="strand" evidence="7">
    <location>
        <begin position="158"/>
        <end position="164"/>
    </location>
</feature>
<feature type="helix" evidence="7">
    <location>
        <begin position="166"/>
        <end position="181"/>
    </location>
</feature>
<feature type="turn" evidence="6">
    <location>
        <begin position="183"/>
        <end position="185"/>
    </location>
</feature>
<feature type="helix" evidence="8">
    <location>
        <begin position="187"/>
        <end position="189"/>
    </location>
</feature>
<feature type="strand" evidence="7">
    <location>
        <begin position="190"/>
        <end position="198"/>
    </location>
</feature>
<feature type="strand" evidence="7">
    <location>
        <begin position="203"/>
        <end position="207"/>
    </location>
</feature>
<feature type="helix" evidence="7">
    <location>
        <begin position="214"/>
        <end position="216"/>
    </location>
</feature>
<feature type="helix" evidence="7">
    <location>
        <begin position="223"/>
        <end position="225"/>
    </location>
</feature>
<feature type="strand" evidence="7">
    <location>
        <begin position="226"/>
        <end position="234"/>
    </location>
</feature>
<gene>
    <name type="primary">tst</name>
</gene>
<comment type="function">
    <text>Responsible for the symptoms of toxic shock syndrome.</text>
</comment>
<comment type="interaction">
    <interactant intactId="EBI-16211350">
        <id>PRO_0000035619</id>
    </interactant>
    <interactant intactId="EBI-15945259">
        <id>P42081-3</id>
        <label>CD86</label>
    </interactant>
    <organismsDiffer>true</organismsDiffer>
    <experiments>2</experiments>
</comment>
<comment type="subcellular location">
    <subcellularLocation>
        <location evidence="2">Secreted</location>
    </subcellularLocation>
</comment>
<comment type="similarity">
    <text evidence="3">Belongs to the staphylococcal/streptococcal toxin family.</text>
</comment>
<dbReference type="EMBL" id="J02615">
    <property type="protein sequence ID" value="AAA26682.1"/>
    <property type="molecule type" value="Genomic_DNA"/>
</dbReference>
<dbReference type="PIR" id="A24606">
    <property type="entry name" value="XCSAS1"/>
</dbReference>
<dbReference type="PDB" id="1AW7">
    <property type="method" value="X-ray"/>
    <property type="resolution" value="1.95 A"/>
    <property type="chains" value="A/B/C/D=41-234"/>
</dbReference>
<dbReference type="PDB" id="1QIL">
    <property type="method" value="X-ray"/>
    <property type="resolution" value="2.50 A"/>
    <property type="chains" value="A/B/C=41-234"/>
</dbReference>
<dbReference type="PDB" id="1TS2">
    <property type="method" value="X-ray"/>
    <property type="resolution" value="2.30 A"/>
    <property type="chains" value="A/B/C=41-234"/>
</dbReference>
<dbReference type="PDB" id="1TS3">
    <property type="method" value="X-ray"/>
    <property type="resolution" value="2.00 A"/>
    <property type="chains" value="A/B/C=41-234"/>
</dbReference>
<dbReference type="PDB" id="1TS4">
    <property type="method" value="X-ray"/>
    <property type="resolution" value="3.40 A"/>
    <property type="chains" value="A/B=41-234"/>
</dbReference>
<dbReference type="PDB" id="1TS5">
    <property type="method" value="X-ray"/>
    <property type="resolution" value="3.10 A"/>
    <property type="chains" value="A/B=41-234"/>
</dbReference>
<dbReference type="PDB" id="2IJ0">
    <property type="method" value="X-ray"/>
    <property type="resolution" value="2.25 A"/>
    <property type="chains" value="A/B=41-234"/>
</dbReference>
<dbReference type="PDB" id="2QIL">
    <property type="method" value="X-ray"/>
    <property type="resolution" value="2.07 A"/>
    <property type="chains" value="A/B/C=41-234"/>
</dbReference>
<dbReference type="PDB" id="2TSS">
    <property type="method" value="X-ray"/>
    <property type="resolution" value="2.05 A"/>
    <property type="chains" value="A/B/C=41-234"/>
</dbReference>
<dbReference type="PDB" id="3TSS">
    <property type="method" value="X-ray"/>
    <property type="resolution" value="1.90 A"/>
    <property type="chains" value="A=41-234"/>
</dbReference>
<dbReference type="PDB" id="4OHJ">
    <property type="method" value="X-ray"/>
    <property type="resolution" value="1.28 A"/>
    <property type="chains" value="A/B=22-234"/>
</dbReference>
<dbReference type="PDB" id="4TSS">
    <property type="method" value="X-ray"/>
    <property type="resolution" value="2.75 A"/>
    <property type="chains" value="A=41-234"/>
</dbReference>
<dbReference type="PDB" id="5TSS">
    <property type="method" value="X-ray"/>
    <property type="resolution" value="2.90 A"/>
    <property type="chains" value="A/B=41-234"/>
</dbReference>
<dbReference type="PDBsum" id="1AW7"/>
<dbReference type="PDBsum" id="1QIL"/>
<dbReference type="PDBsum" id="1TS2"/>
<dbReference type="PDBsum" id="1TS3"/>
<dbReference type="PDBsum" id="1TS4"/>
<dbReference type="PDBsum" id="1TS5"/>
<dbReference type="PDBsum" id="2IJ0"/>
<dbReference type="PDBsum" id="2QIL"/>
<dbReference type="PDBsum" id="2TSS"/>
<dbReference type="PDBsum" id="3TSS"/>
<dbReference type="PDBsum" id="4OHJ"/>
<dbReference type="PDBsum" id="4TSS"/>
<dbReference type="PDBsum" id="5TSS"/>
<dbReference type="SMR" id="P06886"/>
<dbReference type="IntAct" id="P06886">
    <property type="interactions" value="3"/>
</dbReference>
<dbReference type="MINT" id="P06886"/>
<dbReference type="Allergome" id="2143">
    <property type="allergen name" value="Sta a TSST"/>
</dbReference>
<dbReference type="ABCD" id="P06886">
    <property type="antibodies" value="32 sequenced antibodies"/>
</dbReference>
<dbReference type="EvolutionaryTrace" id="P06886"/>
<dbReference type="PRO" id="PR:P06886"/>
<dbReference type="GO" id="GO:0005576">
    <property type="term" value="C:extracellular region"/>
    <property type="evidence" value="ECO:0007669"/>
    <property type="project" value="UniProtKB-SubCell"/>
</dbReference>
<dbReference type="GO" id="GO:0090729">
    <property type="term" value="F:toxin activity"/>
    <property type="evidence" value="ECO:0007669"/>
    <property type="project" value="UniProtKB-KW"/>
</dbReference>
<dbReference type="FunFam" id="2.40.50.110:FF:000004">
    <property type="entry name" value="Toxic shock syndrome toxin-1"/>
    <property type="match status" value="1"/>
</dbReference>
<dbReference type="FunFam" id="3.10.20.120:FF:000003">
    <property type="entry name" value="Toxic shock syndrome toxin-1"/>
    <property type="match status" value="1"/>
</dbReference>
<dbReference type="Gene3D" id="2.40.50.110">
    <property type="match status" value="1"/>
</dbReference>
<dbReference type="Gene3D" id="3.10.20.120">
    <property type="match status" value="1"/>
</dbReference>
<dbReference type="InterPro" id="IPR008992">
    <property type="entry name" value="Enterotoxin"/>
</dbReference>
<dbReference type="InterPro" id="IPR006126">
    <property type="entry name" value="Staph/Strept_toxin_CS"/>
</dbReference>
<dbReference type="InterPro" id="IPR016091">
    <property type="entry name" value="SuperAg_toxin_C"/>
</dbReference>
<dbReference type="InterPro" id="IPR013307">
    <property type="entry name" value="Superantigen_bac"/>
</dbReference>
<dbReference type="InterPro" id="IPR006123">
    <property type="entry name" value="Toxin_b-grasp_Staph/Strep"/>
</dbReference>
<dbReference type="Pfam" id="PF02876">
    <property type="entry name" value="Stap_Strp_tox_C"/>
    <property type="match status" value="1"/>
</dbReference>
<dbReference type="PRINTS" id="PR01501">
    <property type="entry name" value="TOXICSSTOXIN"/>
</dbReference>
<dbReference type="SUPFAM" id="SSF50203">
    <property type="entry name" value="Bacterial enterotoxins"/>
    <property type="match status" value="1"/>
</dbReference>
<dbReference type="SUPFAM" id="SSF54334">
    <property type="entry name" value="Superantigen toxins, C-terminal domain"/>
    <property type="match status" value="1"/>
</dbReference>
<dbReference type="PROSITE" id="PS00278">
    <property type="entry name" value="STAPH_STREP_TOXIN_2"/>
    <property type="match status" value="1"/>
</dbReference>
<accession>P06886</accession>
<evidence type="ECO:0000269" key="1">
    <source>
    </source>
</evidence>
<evidence type="ECO:0000269" key="2">
    <source>
    </source>
</evidence>
<evidence type="ECO:0000305" key="3"/>
<evidence type="ECO:0007829" key="4">
    <source>
        <dbReference type="PDB" id="1QIL"/>
    </source>
</evidence>
<evidence type="ECO:0007829" key="5">
    <source>
        <dbReference type="PDB" id="1TS3"/>
    </source>
</evidence>
<evidence type="ECO:0007829" key="6">
    <source>
        <dbReference type="PDB" id="3TSS"/>
    </source>
</evidence>
<evidence type="ECO:0007829" key="7">
    <source>
        <dbReference type="PDB" id="4OHJ"/>
    </source>
</evidence>
<evidence type="ECO:0007829" key="8">
    <source>
        <dbReference type="PDB" id="4TSS"/>
    </source>
</evidence>
<reference key="1">
    <citation type="journal article" date="1986" name="J. Biol. Chem.">
        <title>The nucleotide and partial amino acid sequence of toxic shock syndrome toxin-1.</title>
        <authorList>
            <person name="Blomster-Hautamaa D.A."/>
            <person name="Kreiswirth B.N."/>
            <person name="Kornblum J.S."/>
            <person name="Novick R.P."/>
            <person name="Schlievert P.M."/>
        </authorList>
    </citation>
    <scope>NUCLEOTIDE SEQUENCE [GENOMIC DNA]</scope>
    <scope>PROTEIN SEQUENCE OF 41-106 AND 199-224</scope>
    <source>
        <strain>3-14</strain>
    </source>
</reference>
<reference key="2">
    <citation type="journal article" date="1983" name="Nature">
        <title>The toxic shock syndrome exotoxin structural gene is not detectably transmitted by a prophage.</title>
        <authorList>
            <person name="Kreiswirth B.N."/>
            <person name="Loefdahl S."/>
            <person name="Betley M.J."/>
            <person name="O'Reilly M."/>
            <person name="Schlievert P.M."/>
            <person name="Bergdoll M.S."/>
            <person name="Novick R.P."/>
        </authorList>
    </citation>
    <scope>GENE CLONING</scope>
    <scope>SUBCELLULAR LOCATION</scope>
    <source>
        <strain>3-14</strain>
    </source>
</reference>
<reference key="3">
    <citation type="journal article" date="1994" name="Nature">
        <title>Structural basis of superantigen action inferred from crystal structure of toxic-shock syndrome toxin-1.</title>
        <authorList>
            <person name="Acharya K.R."/>
            <person name="Passalacqua E.F."/>
            <person name="Jones E.Y."/>
            <person name="Harlos K."/>
            <person name="Stuart D.I."/>
            <person name="Brehm R.D."/>
            <person name="Tranter H.S."/>
        </authorList>
    </citation>
    <scope>X-RAY CRYSTALLOGRAPHY (2.5 ANGSTROMS)</scope>
</reference>
<reference key="4">
    <citation type="journal article" date="1993" name="Biochemistry">
        <title>Structure of toxic shock syndrome toxin 1.</title>
        <authorList>
            <person name="Prasad G.S."/>
            <person name="Earhart C.A."/>
            <person name="Murray D.L."/>
            <person name="Novick R.P."/>
            <person name="Schlivert P.M."/>
            <person name="Ohlendorf D.H."/>
        </authorList>
    </citation>
    <scope>X-RAY CRYSTALLOGRAPHY (2.5 ANGSTROMS)</scope>
</reference>
<reference key="5">
    <citation type="journal article" date="1996" name="J. Mol. Biol.">
        <title>The refined crystal structure of toxic shock syndrome toxin-1 at 2.07-A resolution.</title>
        <authorList>
            <person name="Papgeorgiou A.C."/>
            <person name="Brehm R.D."/>
            <person name="Leonidas D.D."/>
            <person name="Tranter H.S."/>
            <person name="Acharya K.R."/>
        </authorList>
    </citation>
    <scope>X-RAY CRYSTALLOGRAPHY (2.07 ANGSTROMS)</scope>
</reference>
<reference key="6">
    <citation type="journal article" date="1997" name="Protein Sci.">
        <title>Refined structures of three crystal forms of toxic shock syndrome toxin-1 and of a tetramutant with reduced activity.</title>
        <authorList>
            <person name="Prasad G.S."/>
            <person name="Radhakrishnan R."/>
            <person name="Mitchell D.T."/>
            <person name="Earhart C.A."/>
            <person name="Dinges M.M."/>
            <person name="Cook W.J."/>
            <person name="Schlivert P.M."/>
            <person name="Ohlendorf D.H."/>
        </authorList>
    </citation>
    <scope>X-RAY CRYSTALLOGRAPHY (2.05 ANGSTROMS)</scope>
</reference>
<reference key="7">
    <citation type="journal article" date="1998" name="Biochemistry">
        <title>Structures of five mutants of toxic shock syndrome toxin-1 with reduced biological activity.</title>
        <authorList>
            <person name="Earhart C.A."/>
            <person name="Mitchell D.T."/>
            <person name="Murray D.L."/>
            <person name="Pinheiro D.M."/>
            <person name="Matsumura M."/>
            <person name="Schlievert P.M."/>
            <person name="Ohlendorf D.H."/>
        </authorList>
    </citation>
    <scope>X-RAY CRYSTALLOGRAPHY (1.95 ANGSTROMS) OF MUTANTS</scope>
</reference>
<keyword id="KW-0002">3D-structure</keyword>
<keyword id="KW-0903">Direct protein sequencing</keyword>
<keyword id="KW-0964">Secreted</keyword>
<keyword id="KW-0732">Signal</keyword>
<keyword id="KW-0766">Superantigen</keyword>
<keyword id="KW-0800">Toxin</keyword>
<keyword id="KW-0843">Virulence</keyword>
<sequence>MNKKLLMNFFIVSPLLLATTATDFTPVPLSSNQIIKTAKASTNDNIKDLLDWYSSGSDTFTNSEVLDNSLGSMRIKNTDGSISLIIFPSPYYSPAFTKGEKVDLNTKRTKKSQHTSEGTYIHFQISGVTNTEKLPTPIELPLKVKVHGKDSPLKYGPKFDKKQLAISTLDFEIRHQLTQIHGLYRSSDKTGGYWKITMNDGSTYQSDLSKKFEYNTEKPPINIDEIKTIEAEIN</sequence>
<name>TSST_STAAU</name>
<protein>
    <recommendedName>
        <fullName>Toxic shock syndrome toxin-1</fullName>
        <shortName>TSST-1</shortName>
    </recommendedName>
</protein>
<organism>
    <name type="scientific">Staphylococcus aureus</name>
    <dbReference type="NCBI Taxonomy" id="1280"/>
    <lineage>
        <taxon>Bacteria</taxon>
        <taxon>Bacillati</taxon>
        <taxon>Bacillota</taxon>
        <taxon>Bacilli</taxon>
        <taxon>Bacillales</taxon>
        <taxon>Staphylococcaceae</taxon>
        <taxon>Staphylococcus</taxon>
    </lineage>
</organism>
<proteinExistence type="evidence at protein level"/>